<proteinExistence type="inferred from homology"/>
<reference key="1">
    <citation type="journal article" date="2003" name="Proc. Natl. Acad. Sci. U.S.A.">
        <title>The complete genome sequence of the carcinogenic bacterium Helicobacter hepaticus.</title>
        <authorList>
            <person name="Suerbaum S."/>
            <person name="Josenhans C."/>
            <person name="Sterzenbach T."/>
            <person name="Drescher B."/>
            <person name="Brandt P."/>
            <person name="Bell M."/>
            <person name="Droege M."/>
            <person name="Fartmann B."/>
            <person name="Fischer H.-P."/>
            <person name="Ge Z."/>
            <person name="Hoerster A."/>
            <person name="Holland R."/>
            <person name="Klein K."/>
            <person name="Koenig J."/>
            <person name="Macko L."/>
            <person name="Mendz G.L."/>
            <person name="Nyakatura G."/>
            <person name="Schauer D.B."/>
            <person name="Shen Z."/>
            <person name="Weber J."/>
            <person name="Frosch M."/>
            <person name="Fox J.G."/>
        </authorList>
    </citation>
    <scope>NUCLEOTIDE SEQUENCE [LARGE SCALE GENOMIC DNA]</scope>
    <source>
        <strain>ATCC 51449 / 3B1</strain>
    </source>
</reference>
<feature type="chain" id="PRO_0000313263" description="DNA ligase">
    <location>
        <begin position="1"/>
        <end position="650"/>
    </location>
</feature>
<feature type="domain" description="BRCT" evidence="1">
    <location>
        <begin position="573"/>
        <end position="650"/>
    </location>
</feature>
<feature type="active site" description="N6-AMP-lysine intermediate" evidence="1">
    <location>
        <position position="110"/>
    </location>
</feature>
<feature type="binding site" evidence="1">
    <location>
        <begin position="30"/>
        <end position="34"/>
    </location>
    <ligand>
        <name>NAD(+)</name>
        <dbReference type="ChEBI" id="CHEBI:57540"/>
    </ligand>
</feature>
<feature type="binding site" evidence="1">
    <location>
        <begin position="79"/>
        <end position="80"/>
    </location>
    <ligand>
        <name>NAD(+)</name>
        <dbReference type="ChEBI" id="CHEBI:57540"/>
    </ligand>
</feature>
<feature type="binding site" evidence="1">
    <location>
        <position position="131"/>
    </location>
    <ligand>
        <name>NAD(+)</name>
        <dbReference type="ChEBI" id="CHEBI:57540"/>
    </ligand>
</feature>
<feature type="binding site" evidence="1">
    <location>
        <position position="165"/>
    </location>
    <ligand>
        <name>NAD(+)</name>
        <dbReference type="ChEBI" id="CHEBI:57540"/>
    </ligand>
</feature>
<feature type="binding site" evidence="1">
    <location>
        <position position="304"/>
    </location>
    <ligand>
        <name>NAD(+)</name>
        <dbReference type="ChEBI" id="CHEBI:57540"/>
    </ligand>
</feature>
<feature type="binding site" evidence="1">
    <location>
        <position position="398"/>
    </location>
    <ligand>
        <name>Zn(2+)</name>
        <dbReference type="ChEBI" id="CHEBI:29105"/>
    </ligand>
</feature>
<feature type="binding site" evidence="1">
    <location>
        <position position="401"/>
    </location>
    <ligand>
        <name>Zn(2+)</name>
        <dbReference type="ChEBI" id="CHEBI:29105"/>
    </ligand>
</feature>
<feature type="binding site" evidence="1">
    <location>
        <position position="414"/>
    </location>
    <ligand>
        <name>Zn(2+)</name>
        <dbReference type="ChEBI" id="CHEBI:29105"/>
    </ligand>
</feature>
<feature type="binding site" evidence="1">
    <location>
        <position position="419"/>
    </location>
    <ligand>
        <name>Zn(2+)</name>
        <dbReference type="ChEBI" id="CHEBI:29105"/>
    </ligand>
</feature>
<comment type="function">
    <text evidence="1">DNA ligase that catalyzes the formation of phosphodiester linkages between 5'-phosphoryl and 3'-hydroxyl groups in double-stranded DNA using NAD as a coenzyme and as the energy source for the reaction. It is essential for DNA replication and repair of damaged DNA.</text>
</comment>
<comment type="catalytic activity">
    <reaction evidence="1">
        <text>NAD(+) + (deoxyribonucleotide)n-3'-hydroxyl + 5'-phospho-(deoxyribonucleotide)m = (deoxyribonucleotide)n+m + AMP + beta-nicotinamide D-nucleotide.</text>
        <dbReference type="EC" id="6.5.1.2"/>
    </reaction>
</comment>
<comment type="cofactor">
    <cofactor evidence="1">
        <name>Mg(2+)</name>
        <dbReference type="ChEBI" id="CHEBI:18420"/>
    </cofactor>
    <cofactor evidence="1">
        <name>Mn(2+)</name>
        <dbReference type="ChEBI" id="CHEBI:29035"/>
    </cofactor>
</comment>
<comment type="similarity">
    <text evidence="1">Belongs to the NAD-dependent DNA ligase family. LigA subfamily.</text>
</comment>
<accession>Q7VF74</accession>
<organism>
    <name type="scientific">Helicobacter hepaticus (strain ATCC 51449 / 3B1)</name>
    <dbReference type="NCBI Taxonomy" id="235279"/>
    <lineage>
        <taxon>Bacteria</taxon>
        <taxon>Pseudomonadati</taxon>
        <taxon>Campylobacterota</taxon>
        <taxon>Epsilonproteobacteria</taxon>
        <taxon>Campylobacterales</taxon>
        <taxon>Helicobacteraceae</taxon>
        <taxon>Helicobacter</taxon>
    </lineage>
</organism>
<evidence type="ECO:0000255" key="1">
    <source>
        <dbReference type="HAMAP-Rule" id="MF_01588"/>
    </source>
</evidence>
<dbReference type="EC" id="6.5.1.2" evidence="1"/>
<dbReference type="EMBL" id="AE017125">
    <property type="protein sequence ID" value="AAP78400.1"/>
    <property type="molecule type" value="Genomic_DNA"/>
</dbReference>
<dbReference type="SMR" id="Q7VF74"/>
<dbReference type="STRING" id="235279.HH_1803"/>
<dbReference type="KEGG" id="hhe:HH_1803"/>
<dbReference type="eggNOG" id="COG0272">
    <property type="taxonomic scope" value="Bacteria"/>
</dbReference>
<dbReference type="HOGENOM" id="CLU_007764_2_1_7"/>
<dbReference type="OrthoDB" id="9759736at2"/>
<dbReference type="Proteomes" id="UP000002495">
    <property type="component" value="Chromosome"/>
</dbReference>
<dbReference type="GO" id="GO:0005829">
    <property type="term" value="C:cytosol"/>
    <property type="evidence" value="ECO:0007669"/>
    <property type="project" value="TreeGrafter"/>
</dbReference>
<dbReference type="GO" id="GO:0003911">
    <property type="term" value="F:DNA ligase (NAD+) activity"/>
    <property type="evidence" value="ECO:0007669"/>
    <property type="project" value="UniProtKB-UniRule"/>
</dbReference>
<dbReference type="GO" id="GO:0046872">
    <property type="term" value="F:metal ion binding"/>
    <property type="evidence" value="ECO:0007669"/>
    <property type="project" value="UniProtKB-KW"/>
</dbReference>
<dbReference type="GO" id="GO:0006281">
    <property type="term" value="P:DNA repair"/>
    <property type="evidence" value="ECO:0007669"/>
    <property type="project" value="UniProtKB-KW"/>
</dbReference>
<dbReference type="GO" id="GO:0006260">
    <property type="term" value="P:DNA replication"/>
    <property type="evidence" value="ECO:0007669"/>
    <property type="project" value="UniProtKB-KW"/>
</dbReference>
<dbReference type="CDD" id="cd17748">
    <property type="entry name" value="BRCT_DNA_ligase_like"/>
    <property type="match status" value="1"/>
</dbReference>
<dbReference type="CDD" id="cd00114">
    <property type="entry name" value="LIGANc"/>
    <property type="match status" value="1"/>
</dbReference>
<dbReference type="FunFam" id="1.10.150.20:FF:000007">
    <property type="entry name" value="DNA ligase"/>
    <property type="match status" value="1"/>
</dbReference>
<dbReference type="FunFam" id="2.40.50.140:FF:000012">
    <property type="entry name" value="DNA ligase"/>
    <property type="match status" value="1"/>
</dbReference>
<dbReference type="Gene3D" id="1.10.150.20">
    <property type="entry name" value="5' to 3' exonuclease, C-terminal subdomain"/>
    <property type="match status" value="2"/>
</dbReference>
<dbReference type="Gene3D" id="3.40.50.10190">
    <property type="entry name" value="BRCT domain"/>
    <property type="match status" value="1"/>
</dbReference>
<dbReference type="Gene3D" id="3.30.470.30">
    <property type="entry name" value="DNA ligase/mRNA capping enzyme"/>
    <property type="match status" value="1"/>
</dbReference>
<dbReference type="Gene3D" id="1.10.287.610">
    <property type="entry name" value="Helix hairpin bin"/>
    <property type="match status" value="1"/>
</dbReference>
<dbReference type="Gene3D" id="2.40.50.140">
    <property type="entry name" value="Nucleic acid-binding proteins"/>
    <property type="match status" value="1"/>
</dbReference>
<dbReference type="HAMAP" id="MF_01588">
    <property type="entry name" value="DNA_ligase_A"/>
    <property type="match status" value="1"/>
</dbReference>
<dbReference type="InterPro" id="IPR001357">
    <property type="entry name" value="BRCT_dom"/>
</dbReference>
<dbReference type="InterPro" id="IPR036420">
    <property type="entry name" value="BRCT_dom_sf"/>
</dbReference>
<dbReference type="InterPro" id="IPR041663">
    <property type="entry name" value="DisA/LigA_HHH"/>
</dbReference>
<dbReference type="InterPro" id="IPR001679">
    <property type="entry name" value="DNA_ligase"/>
</dbReference>
<dbReference type="InterPro" id="IPR018239">
    <property type="entry name" value="DNA_ligase_AS"/>
</dbReference>
<dbReference type="InterPro" id="IPR033136">
    <property type="entry name" value="DNA_ligase_CS"/>
</dbReference>
<dbReference type="InterPro" id="IPR013839">
    <property type="entry name" value="DNAligase_adenylation"/>
</dbReference>
<dbReference type="InterPro" id="IPR013840">
    <property type="entry name" value="DNAligase_N"/>
</dbReference>
<dbReference type="InterPro" id="IPR012340">
    <property type="entry name" value="NA-bd_OB-fold"/>
</dbReference>
<dbReference type="InterPro" id="IPR004150">
    <property type="entry name" value="NAD_DNA_ligase_OB"/>
</dbReference>
<dbReference type="InterPro" id="IPR010994">
    <property type="entry name" value="RuvA_2-like"/>
</dbReference>
<dbReference type="NCBIfam" id="TIGR00575">
    <property type="entry name" value="dnlj"/>
    <property type="match status" value="1"/>
</dbReference>
<dbReference type="NCBIfam" id="NF005932">
    <property type="entry name" value="PRK07956.1"/>
    <property type="match status" value="1"/>
</dbReference>
<dbReference type="PANTHER" id="PTHR23389">
    <property type="entry name" value="CHROMOSOME TRANSMISSION FIDELITY FACTOR 18"/>
    <property type="match status" value="1"/>
</dbReference>
<dbReference type="PANTHER" id="PTHR23389:SF9">
    <property type="entry name" value="DNA LIGASE"/>
    <property type="match status" value="1"/>
</dbReference>
<dbReference type="Pfam" id="PF00533">
    <property type="entry name" value="BRCT"/>
    <property type="match status" value="1"/>
</dbReference>
<dbReference type="Pfam" id="PF01653">
    <property type="entry name" value="DNA_ligase_aden"/>
    <property type="match status" value="1"/>
</dbReference>
<dbReference type="Pfam" id="PF03120">
    <property type="entry name" value="DNA_ligase_OB"/>
    <property type="match status" value="1"/>
</dbReference>
<dbReference type="Pfam" id="PF12826">
    <property type="entry name" value="HHH_2"/>
    <property type="match status" value="1"/>
</dbReference>
<dbReference type="PIRSF" id="PIRSF001604">
    <property type="entry name" value="LigA"/>
    <property type="match status" value="1"/>
</dbReference>
<dbReference type="SMART" id="SM00292">
    <property type="entry name" value="BRCT"/>
    <property type="match status" value="1"/>
</dbReference>
<dbReference type="SMART" id="SM00532">
    <property type="entry name" value="LIGANc"/>
    <property type="match status" value="1"/>
</dbReference>
<dbReference type="SUPFAM" id="SSF52113">
    <property type="entry name" value="BRCT domain"/>
    <property type="match status" value="1"/>
</dbReference>
<dbReference type="SUPFAM" id="SSF56091">
    <property type="entry name" value="DNA ligase/mRNA capping enzyme, catalytic domain"/>
    <property type="match status" value="1"/>
</dbReference>
<dbReference type="SUPFAM" id="SSF50249">
    <property type="entry name" value="Nucleic acid-binding proteins"/>
    <property type="match status" value="1"/>
</dbReference>
<dbReference type="SUPFAM" id="SSF47781">
    <property type="entry name" value="RuvA domain 2-like"/>
    <property type="match status" value="1"/>
</dbReference>
<dbReference type="PROSITE" id="PS50172">
    <property type="entry name" value="BRCT"/>
    <property type="match status" value="1"/>
</dbReference>
<dbReference type="PROSITE" id="PS01055">
    <property type="entry name" value="DNA_LIGASE_N1"/>
    <property type="match status" value="1"/>
</dbReference>
<dbReference type="PROSITE" id="PS01056">
    <property type="entry name" value="DNA_LIGASE_N2"/>
    <property type="match status" value="1"/>
</dbReference>
<keyword id="KW-0227">DNA damage</keyword>
<keyword id="KW-0234">DNA repair</keyword>
<keyword id="KW-0235">DNA replication</keyword>
<keyword id="KW-0436">Ligase</keyword>
<keyword id="KW-0460">Magnesium</keyword>
<keyword id="KW-0464">Manganese</keyword>
<keyword id="KW-0479">Metal-binding</keyword>
<keyword id="KW-0520">NAD</keyword>
<keyword id="KW-1185">Reference proteome</keyword>
<keyword id="KW-0862">Zinc</keyword>
<name>DNLJ_HELHP</name>
<gene>
    <name evidence="1" type="primary">ligA</name>
    <name type="ordered locus">HH_1803</name>
</gene>
<sequence>MTSQEYYTQVQILKKMAYHYYVLDEPIATDEQYDSLYHQIVRFEEENPHLIDASSPTQRVGDVPLESFSKNTHLERMWSLEDVFNYDELVEWVQRIYKSYPQATFTCSPKFDGASLNLLYQEGKLVSATTRGDGVIGELVTHNAKTIQSIPLEINYKEEIEIRGEVVIAKEDFEYINQDRLSENLSLFANPRNAAAGSLRQLDAKITAKRKLRFMPWGIGAGLIRFESFYEAFNTITRLGFAPVPFLSYCESIESIQNAYNVLFSQRNNYPIMLDGMVIMLDKIASQQQLGWTIKSPRFACAYKFPAVEKSSKILSVSLQVGRTGIITPVAELKPVEIEGAMISRATLHNFSEIERKDIRLGDEVIIIRSGDVIPKIIKPLVALRDGTQKVISKPTHCPVCGEELLLEDIFIKCQNLSCEARVIESIIHFASKKALNIDGLGEKIVIQLYENAFVRNIKDIYALSIQQLLTLEGWQEKRANNLIYAIQNTIGVELWRFINALGIEHIGEGASKKLAQKFGLNVFELELSEILSVDGFGEEMAYSLVEFNHANKTLIAELLCIIKPKVELLEIDNNNVFFNKTIVLTGTLSQPRDRIIKLLESKGAKISSSVSKKTDFVIYGEKAGSKLEKAQSLNITTLNEEEFLAQINK</sequence>
<protein>
    <recommendedName>
        <fullName evidence="1">DNA ligase</fullName>
        <ecNumber evidence="1">6.5.1.2</ecNumber>
    </recommendedName>
    <alternativeName>
        <fullName evidence="1">Polydeoxyribonucleotide synthase [NAD(+)]</fullName>
    </alternativeName>
</protein>